<organism>
    <name type="scientific">Bacillus cereus (strain Q1)</name>
    <dbReference type="NCBI Taxonomy" id="361100"/>
    <lineage>
        <taxon>Bacteria</taxon>
        <taxon>Bacillati</taxon>
        <taxon>Bacillota</taxon>
        <taxon>Bacilli</taxon>
        <taxon>Bacillales</taxon>
        <taxon>Bacillaceae</taxon>
        <taxon>Bacillus</taxon>
        <taxon>Bacillus cereus group</taxon>
    </lineage>
</organism>
<sequence length="156" mass="17696">MDKKVTEVVEAFAQPIVEELNLELVDVEYVKEGQDWFLRVFIDSEKGVDIEECGAVSERLSEALDKEDPIPHLYFLDVSSPGAERPLKKEKDFQQAVGKQVAIKTYEPIDGEKMFEGKMLSYDGTTITLLLTIKTRKKEIQIPMDKVANARLAVTF</sequence>
<proteinExistence type="inferred from homology"/>
<gene>
    <name evidence="1" type="primary">rimP</name>
    <name type="ordered locus">BCQ_3601</name>
</gene>
<comment type="function">
    <text evidence="1">Required for maturation of 30S ribosomal subunits.</text>
</comment>
<comment type="subcellular location">
    <subcellularLocation>
        <location evidence="1">Cytoplasm</location>
    </subcellularLocation>
</comment>
<comment type="similarity">
    <text evidence="1">Belongs to the RimP family.</text>
</comment>
<reference key="1">
    <citation type="journal article" date="2009" name="J. Bacteriol.">
        <title>Complete genome sequence of the extremophilic Bacillus cereus strain Q1 with industrial applications.</title>
        <authorList>
            <person name="Xiong Z."/>
            <person name="Jiang Y."/>
            <person name="Qi D."/>
            <person name="Lu H."/>
            <person name="Yang F."/>
            <person name="Yang J."/>
            <person name="Chen L."/>
            <person name="Sun L."/>
            <person name="Xu X."/>
            <person name="Xue Y."/>
            <person name="Zhu Y."/>
            <person name="Jin Q."/>
        </authorList>
    </citation>
    <scope>NUCLEOTIDE SEQUENCE [LARGE SCALE GENOMIC DNA]</scope>
    <source>
        <strain>Q1</strain>
    </source>
</reference>
<dbReference type="EMBL" id="CP000227">
    <property type="protein sequence ID" value="ACM14029.1"/>
    <property type="molecule type" value="Genomic_DNA"/>
</dbReference>
<dbReference type="SMR" id="B9IVA5"/>
<dbReference type="KEGG" id="bcq:BCQ_3601"/>
<dbReference type="HOGENOM" id="CLU_070525_2_0_9"/>
<dbReference type="Proteomes" id="UP000000441">
    <property type="component" value="Chromosome"/>
</dbReference>
<dbReference type="GO" id="GO:0005829">
    <property type="term" value="C:cytosol"/>
    <property type="evidence" value="ECO:0007669"/>
    <property type="project" value="TreeGrafter"/>
</dbReference>
<dbReference type="GO" id="GO:0000028">
    <property type="term" value="P:ribosomal small subunit assembly"/>
    <property type="evidence" value="ECO:0007669"/>
    <property type="project" value="TreeGrafter"/>
</dbReference>
<dbReference type="GO" id="GO:0006412">
    <property type="term" value="P:translation"/>
    <property type="evidence" value="ECO:0007669"/>
    <property type="project" value="TreeGrafter"/>
</dbReference>
<dbReference type="CDD" id="cd01734">
    <property type="entry name" value="YlxS_C"/>
    <property type="match status" value="1"/>
</dbReference>
<dbReference type="FunFam" id="2.30.30.180:FF:000002">
    <property type="entry name" value="Ribosome maturation factor RimP"/>
    <property type="match status" value="1"/>
</dbReference>
<dbReference type="FunFam" id="3.30.300.70:FF:000001">
    <property type="entry name" value="Ribosome maturation factor RimP"/>
    <property type="match status" value="1"/>
</dbReference>
<dbReference type="Gene3D" id="2.30.30.180">
    <property type="entry name" value="Ribosome maturation factor RimP, C-terminal domain"/>
    <property type="match status" value="1"/>
</dbReference>
<dbReference type="Gene3D" id="3.30.300.70">
    <property type="entry name" value="RimP-like superfamily, N-terminal"/>
    <property type="match status" value="1"/>
</dbReference>
<dbReference type="HAMAP" id="MF_01077">
    <property type="entry name" value="RimP"/>
    <property type="match status" value="1"/>
</dbReference>
<dbReference type="InterPro" id="IPR003728">
    <property type="entry name" value="Ribosome_maturation_RimP"/>
</dbReference>
<dbReference type="InterPro" id="IPR028998">
    <property type="entry name" value="RimP_C"/>
</dbReference>
<dbReference type="InterPro" id="IPR036847">
    <property type="entry name" value="RimP_C_sf"/>
</dbReference>
<dbReference type="InterPro" id="IPR028989">
    <property type="entry name" value="RimP_N"/>
</dbReference>
<dbReference type="InterPro" id="IPR035956">
    <property type="entry name" value="RimP_N_sf"/>
</dbReference>
<dbReference type="NCBIfam" id="NF000928">
    <property type="entry name" value="PRK00092.1-2"/>
    <property type="match status" value="1"/>
</dbReference>
<dbReference type="PANTHER" id="PTHR33867">
    <property type="entry name" value="RIBOSOME MATURATION FACTOR RIMP"/>
    <property type="match status" value="1"/>
</dbReference>
<dbReference type="PANTHER" id="PTHR33867:SF1">
    <property type="entry name" value="RIBOSOME MATURATION FACTOR RIMP"/>
    <property type="match status" value="1"/>
</dbReference>
<dbReference type="Pfam" id="PF17384">
    <property type="entry name" value="DUF150_C"/>
    <property type="match status" value="1"/>
</dbReference>
<dbReference type="Pfam" id="PF02576">
    <property type="entry name" value="RimP_N"/>
    <property type="match status" value="1"/>
</dbReference>
<dbReference type="SUPFAM" id="SSF74942">
    <property type="entry name" value="YhbC-like, C-terminal domain"/>
    <property type="match status" value="1"/>
</dbReference>
<dbReference type="SUPFAM" id="SSF75420">
    <property type="entry name" value="YhbC-like, N-terminal domain"/>
    <property type="match status" value="1"/>
</dbReference>
<evidence type="ECO:0000255" key="1">
    <source>
        <dbReference type="HAMAP-Rule" id="MF_01077"/>
    </source>
</evidence>
<accession>B9IVA5</accession>
<name>RIMP_BACCQ</name>
<keyword id="KW-0963">Cytoplasm</keyword>
<keyword id="KW-0690">Ribosome biogenesis</keyword>
<feature type="chain" id="PRO_1000149781" description="Ribosome maturation factor RimP">
    <location>
        <begin position="1"/>
        <end position="156"/>
    </location>
</feature>
<protein>
    <recommendedName>
        <fullName evidence="1">Ribosome maturation factor RimP</fullName>
    </recommendedName>
</protein>